<accession>Q0A4N0</accession>
<comment type="function">
    <text evidence="1">Catalyzes the last two sequential reactions in the de novo biosynthetic pathway for UDP-N-acetylglucosamine (UDP-GlcNAc). The C-terminal domain catalyzes the transfer of acetyl group from acetyl coenzyme A to glucosamine-1-phosphate (GlcN-1-P) to produce N-acetylglucosamine-1-phosphate (GlcNAc-1-P), which is converted into UDP-GlcNAc by the transfer of uridine 5-monophosphate (from uridine 5-triphosphate), a reaction catalyzed by the N-terminal domain.</text>
</comment>
<comment type="catalytic activity">
    <reaction evidence="1">
        <text>alpha-D-glucosamine 1-phosphate + acetyl-CoA = N-acetyl-alpha-D-glucosamine 1-phosphate + CoA + H(+)</text>
        <dbReference type="Rhea" id="RHEA:13725"/>
        <dbReference type="ChEBI" id="CHEBI:15378"/>
        <dbReference type="ChEBI" id="CHEBI:57287"/>
        <dbReference type="ChEBI" id="CHEBI:57288"/>
        <dbReference type="ChEBI" id="CHEBI:57776"/>
        <dbReference type="ChEBI" id="CHEBI:58516"/>
        <dbReference type="EC" id="2.3.1.157"/>
    </reaction>
</comment>
<comment type="catalytic activity">
    <reaction evidence="1">
        <text>N-acetyl-alpha-D-glucosamine 1-phosphate + UTP + H(+) = UDP-N-acetyl-alpha-D-glucosamine + diphosphate</text>
        <dbReference type="Rhea" id="RHEA:13509"/>
        <dbReference type="ChEBI" id="CHEBI:15378"/>
        <dbReference type="ChEBI" id="CHEBI:33019"/>
        <dbReference type="ChEBI" id="CHEBI:46398"/>
        <dbReference type="ChEBI" id="CHEBI:57705"/>
        <dbReference type="ChEBI" id="CHEBI:57776"/>
        <dbReference type="EC" id="2.7.7.23"/>
    </reaction>
</comment>
<comment type="cofactor">
    <cofactor evidence="1">
        <name>Mg(2+)</name>
        <dbReference type="ChEBI" id="CHEBI:18420"/>
    </cofactor>
    <text evidence="1">Binds 1 Mg(2+) ion per subunit.</text>
</comment>
<comment type="pathway">
    <text evidence="1">Nucleotide-sugar biosynthesis; UDP-N-acetyl-alpha-D-glucosamine biosynthesis; N-acetyl-alpha-D-glucosamine 1-phosphate from alpha-D-glucosamine 6-phosphate (route II): step 2/2.</text>
</comment>
<comment type="pathway">
    <text evidence="1">Nucleotide-sugar biosynthesis; UDP-N-acetyl-alpha-D-glucosamine biosynthesis; UDP-N-acetyl-alpha-D-glucosamine from N-acetyl-alpha-D-glucosamine 1-phosphate: step 1/1.</text>
</comment>
<comment type="pathway">
    <text evidence="1">Bacterial outer membrane biogenesis; LPS lipid A biosynthesis.</text>
</comment>
<comment type="subunit">
    <text evidence="1">Homotrimer.</text>
</comment>
<comment type="subcellular location">
    <subcellularLocation>
        <location evidence="1">Cytoplasm</location>
    </subcellularLocation>
</comment>
<comment type="similarity">
    <text evidence="1">In the N-terminal section; belongs to the N-acetylglucosamine-1-phosphate uridyltransferase family.</text>
</comment>
<comment type="similarity">
    <text evidence="1">In the C-terminal section; belongs to the transferase hexapeptide repeat family.</text>
</comment>
<comment type="sequence caution" evidence="3">
    <conflict type="erroneous initiation">
        <sequence resource="EMBL-CDS" id="ABI58207"/>
    </conflict>
    <text>Extended N-terminus.</text>
</comment>
<protein>
    <recommendedName>
        <fullName evidence="1">Bifunctional protein GlmU</fullName>
    </recommendedName>
    <domain>
        <recommendedName>
            <fullName evidence="1">UDP-N-acetylglucosamine pyrophosphorylase</fullName>
            <ecNumber evidence="1">2.7.7.23</ecNumber>
        </recommendedName>
        <alternativeName>
            <fullName evidence="1">N-acetylglucosamine-1-phosphate uridyltransferase</fullName>
        </alternativeName>
    </domain>
    <domain>
        <recommendedName>
            <fullName evidence="1">Glucosamine-1-phosphate N-acetyltransferase</fullName>
            <ecNumber evidence="1">2.3.1.157</ecNumber>
        </recommendedName>
    </domain>
</protein>
<gene>
    <name evidence="1" type="primary">glmU</name>
    <name type="ordered locus">Mlg_2867</name>
</gene>
<proteinExistence type="inferred from homology"/>
<evidence type="ECO:0000255" key="1">
    <source>
        <dbReference type="HAMAP-Rule" id="MF_01631"/>
    </source>
</evidence>
<evidence type="ECO:0000256" key="2">
    <source>
        <dbReference type="SAM" id="MobiDB-lite"/>
    </source>
</evidence>
<evidence type="ECO:0000305" key="3"/>
<reference key="1">
    <citation type="submission" date="2006-08" db="EMBL/GenBank/DDBJ databases">
        <title>Complete sequence of Alkalilimnicola ehrilichei MLHE-1.</title>
        <authorList>
            <person name="Copeland A."/>
            <person name="Lucas S."/>
            <person name="Lapidus A."/>
            <person name="Barry K."/>
            <person name="Detter J.C."/>
            <person name="Glavina del Rio T."/>
            <person name="Hammon N."/>
            <person name="Israni S."/>
            <person name="Dalin E."/>
            <person name="Tice H."/>
            <person name="Pitluck S."/>
            <person name="Sims D."/>
            <person name="Brettin T."/>
            <person name="Bruce D."/>
            <person name="Han C."/>
            <person name="Tapia R."/>
            <person name="Gilna P."/>
            <person name="Schmutz J."/>
            <person name="Larimer F."/>
            <person name="Land M."/>
            <person name="Hauser L."/>
            <person name="Kyrpides N."/>
            <person name="Mikhailova N."/>
            <person name="Oremland R.S."/>
            <person name="Hoeft S.E."/>
            <person name="Switzer-Blum J."/>
            <person name="Kulp T."/>
            <person name="King G."/>
            <person name="Tabita R."/>
            <person name="Witte B."/>
            <person name="Santini J.M."/>
            <person name="Basu P."/>
            <person name="Hollibaugh J.T."/>
            <person name="Xie G."/>
            <person name="Stolz J.F."/>
            <person name="Richardson P."/>
        </authorList>
    </citation>
    <scope>NUCLEOTIDE SEQUENCE [LARGE SCALE GENOMIC DNA]</scope>
    <source>
        <strain>ATCC BAA-1101 / DSM 17681 / MLHE-1</strain>
    </source>
</reference>
<name>GLMU_ALKEH</name>
<dbReference type="EC" id="2.7.7.23" evidence="1"/>
<dbReference type="EC" id="2.3.1.157" evidence="1"/>
<dbReference type="EMBL" id="CP000453">
    <property type="protein sequence ID" value="ABI58207.1"/>
    <property type="status" value="ALT_INIT"/>
    <property type="molecule type" value="Genomic_DNA"/>
</dbReference>
<dbReference type="RefSeq" id="WP_041718097.1">
    <property type="nucleotide sequence ID" value="NC_008340.1"/>
</dbReference>
<dbReference type="SMR" id="Q0A4N0"/>
<dbReference type="KEGG" id="aeh:Mlg_2867"/>
<dbReference type="eggNOG" id="COG1207">
    <property type="taxonomic scope" value="Bacteria"/>
</dbReference>
<dbReference type="HOGENOM" id="CLU_029499_15_2_6"/>
<dbReference type="OrthoDB" id="9775031at2"/>
<dbReference type="UniPathway" id="UPA00113">
    <property type="reaction ID" value="UER00532"/>
</dbReference>
<dbReference type="UniPathway" id="UPA00113">
    <property type="reaction ID" value="UER00533"/>
</dbReference>
<dbReference type="UniPathway" id="UPA00973"/>
<dbReference type="Proteomes" id="UP000001962">
    <property type="component" value="Chromosome"/>
</dbReference>
<dbReference type="GO" id="GO:0005737">
    <property type="term" value="C:cytoplasm"/>
    <property type="evidence" value="ECO:0007669"/>
    <property type="project" value="UniProtKB-SubCell"/>
</dbReference>
<dbReference type="GO" id="GO:0016020">
    <property type="term" value="C:membrane"/>
    <property type="evidence" value="ECO:0007669"/>
    <property type="project" value="GOC"/>
</dbReference>
<dbReference type="GO" id="GO:0019134">
    <property type="term" value="F:glucosamine-1-phosphate N-acetyltransferase activity"/>
    <property type="evidence" value="ECO:0007669"/>
    <property type="project" value="UniProtKB-UniRule"/>
</dbReference>
<dbReference type="GO" id="GO:0000287">
    <property type="term" value="F:magnesium ion binding"/>
    <property type="evidence" value="ECO:0007669"/>
    <property type="project" value="UniProtKB-UniRule"/>
</dbReference>
<dbReference type="GO" id="GO:0003977">
    <property type="term" value="F:UDP-N-acetylglucosamine diphosphorylase activity"/>
    <property type="evidence" value="ECO:0007669"/>
    <property type="project" value="UniProtKB-UniRule"/>
</dbReference>
<dbReference type="GO" id="GO:0000902">
    <property type="term" value="P:cell morphogenesis"/>
    <property type="evidence" value="ECO:0007669"/>
    <property type="project" value="UniProtKB-UniRule"/>
</dbReference>
<dbReference type="GO" id="GO:0071555">
    <property type="term" value="P:cell wall organization"/>
    <property type="evidence" value="ECO:0007669"/>
    <property type="project" value="UniProtKB-KW"/>
</dbReference>
<dbReference type="GO" id="GO:0009245">
    <property type="term" value="P:lipid A biosynthetic process"/>
    <property type="evidence" value="ECO:0007669"/>
    <property type="project" value="UniProtKB-UniRule"/>
</dbReference>
<dbReference type="GO" id="GO:0009252">
    <property type="term" value="P:peptidoglycan biosynthetic process"/>
    <property type="evidence" value="ECO:0007669"/>
    <property type="project" value="UniProtKB-UniRule"/>
</dbReference>
<dbReference type="GO" id="GO:0008360">
    <property type="term" value="P:regulation of cell shape"/>
    <property type="evidence" value="ECO:0007669"/>
    <property type="project" value="UniProtKB-KW"/>
</dbReference>
<dbReference type="GO" id="GO:0006048">
    <property type="term" value="P:UDP-N-acetylglucosamine biosynthetic process"/>
    <property type="evidence" value="ECO:0007669"/>
    <property type="project" value="UniProtKB-UniPathway"/>
</dbReference>
<dbReference type="CDD" id="cd02540">
    <property type="entry name" value="GT2_GlmU_N_bac"/>
    <property type="match status" value="1"/>
</dbReference>
<dbReference type="CDD" id="cd03353">
    <property type="entry name" value="LbH_GlmU_C"/>
    <property type="match status" value="1"/>
</dbReference>
<dbReference type="Gene3D" id="2.160.10.10">
    <property type="entry name" value="Hexapeptide repeat proteins"/>
    <property type="match status" value="1"/>
</dbReference>
<dbReference type="Gene3D" id="3.90.550.10">
    <property type="entry name" value="Spore Coat Polysaccharide Biosynthesis Protein SpsA, Chain A"/>
    <property type="match status" value="1"/>
</dbReference>
<dbReference type="HAMAP" id="MF_01631">
    <property type="entry name" value="GlmU"/>
    <property type="match status" value="1"/>
</dbReference>
<dbReference type="InterPro" id="IPR005882">
    <property type="entry name" value="Bifunctional_GlmU"/>
</dbReference>
<dbReference type="InterPro" id="IPR050065">
    <property type="entry name" value="GlmU-like"/>
</dbReference>
<dbReference type="InterPro" id="IPR038009">
    <property type="entry name" value="GlmU_C_LbH"/>
</dbReference>
<dbReference type="InterPro" id="IPR001451">
    <property type="entry name" value="Hexapep"/>
</dbReference>
<dbReference type="InterPro" id="IPR025877">
    <property type="entry name" value="MobA-like_NTP_Trfase"/>
</dbReference>
<dbReference type="InterPro" id="IPR029044">
    <property type="entry name" value="Nucleotide-diphossugar_trans"/>
</dbReference>
<dbReference type="InterPro" id="IPR011004">
    <property type="entry name" value="Trimer_LpxA-like_sf"/>
</dbReference>
<dbReference type="NCBIfam" id="TIGR01173">
    <property type="entry name" value="glmU"/>
    <property type="match status" value="1"/>
</dbReference>
<dbReference type="NCBIfam" id="NF010933">
    <property type="entry name" value="PRK14353.1"/>
    <property type="match status" value="1"/>
</dbReference>
<dbReference type="PANTHER" id="PTHR43584:SF3">
    <property type="entry name" value="BIFUNCTIONAL PROTEIN GLMU"/>
    <property type="match status" value="1"/>
</dbReference>
<dbReference type="PANTHER" id="PTHR43584">
    <property type="entry name" value="NUCLEOTIDYL TRANSFERASE"/>
    <property type="match status" value="1"/>
</dbReference>
<dbReference type="Pfam" id="PF00132">
    <property type="entry name" value="Hexapep"/>
    <property type="match status" value="1"/>
</dbReference>
<dbReference type="Pfam" id="PF12804">
    <property type="entry name" value="NTP_transf_3"/>
    <property type="match status" value="1"/>
</dbReference>
<dbReference type="SUPFAM" id="SSF53448">
    <property type="entry name" value="Nucleotide-diphospho-sugar transferases"/>
    <property type="match status" value="1"/>
</dbReference>
<dbReference type="SUPFAM" id="SSF51161">
    <property type="entry name" value="Trimeric LpxA-like enzymes"/>
    <property type="match status" value="1"/>
</dbReference>
<organism>
    <name type="scientific">Alkalilimnicola ehrlichii (strain ATCC BAA-1101 / DSM 17681 / MLHE-1)</name>
    <dbReference type="NCBI Taxonomy" id="187272"/>
    <lineage>
        <taxon>Bacteria</taxon>
        <taxon>Pseudomonadati</taxon>
        <taxon>Pseudomonadota</taxon>
        <taxon>Gammaproteobacteria</taxon>
        <taxon>Chromatiales</taxon>
        <taxon>Ectothiorhodospiraceae</taxon>
        <taxon>Alkalilimnicola</taxon>
    </lineage>
</organism>
<feature type="chain" id="PRO_0000263118" description="Bifunctional protein GlmU">
    <location>
        <begin position="1"/>
        <end position="463"/>
    </location>
</feature>
<feature type="region of interest" description="Pyrophosphorylase" evidence="1">
    <location>
        <begin position="1"/>
        <end position="228"/>
    </location>
</feature>
<feature type="region of interest" description="Linker" evidence="1">
    <location>
        <begin position="229"/>
        <end position="249"/>
    </location>
</feature>
<feature type="region of interest" description="N-acetyltransferase" evidence="1">
    <location>
        <begin position="250"/>
        <end position="463"/>
    </location>
</feature>
<feature type="region of interest" description="Disordered" evidence="2">
    <location>
        <begin position="437"/>
        <end position="463"/>
    </location>
</feature>
<feature type="compositionally biased region" description="Basic and acidic residues" evidence="2">
    <location>
        <begin position="453"/>
        <end position="463"/>
    </location>
</feature>
<feature type="active site" description="Proton acceptor" evidence="1">
    <location>
        <position position="362"/>
    </location>
</feature>
<feature type="binding site" evidence="1">
    <location>
        <begin position="10"/>
        <end position="13"/>
    </location>
    <ligand>
        <name>UDP-N-acetyl-alpha-D-glucosamine</name>
        <dbReference type="ChEBI" id="CHEBI:57705"/>
    </ligand>
</feature>
<feature type="binding site" evidence="1">
    <location>
        <position position="24"/>
    </location>
    <ligand>
        <name>UDP-N-acetyl-alpha-D-glucosamine</name>
        <dbReference type="ChEBI" id="CHEBI:57705"/>
    </ligand>
</feature>
<feature type="binding site" evidence="1">
    <location>
        <position position="75"/>
    </location>
    <ligand>
        <name>UDP-N-acetyl-alpha-D-glucosamine</name>
        <dbReference type="ChEBI" id="CHEBI:57705"/>
    </ligand>
</feature>
<feature type="binding site" evidence="1">
    <location>
        <begin position="80"/>
        <end position="81"/>
    </location>
    <ligand>
        <name>UDP-N-acetyl-alpha-D-glucosamine</name>
        <dbReference type="ChEBI" id="CHEBI:57705"/>
    </ligand>
</feature>
<feature type="binding site" evidence="1">
    <location>
        <begin position="102"/>
        <end position="104"/>
    </location>
    <ligand>
        <name>UDP-N-acetyl-alpha-D-glucosamine</name>
        <dbReference type="ChEBI" id="CHEBI:57705"/>
    </ligand>
</feature>
<feature type="binding site" evidence="1">
    <location>
        <position position="104"/>
    </location>
    <ligand>
        <name>Mg(2+)</name>
        <dbReference type="ChEBI" id="CHEBI:18420"/>
    </ligand>
</feature>
<feature type="binding site" evidence="1">
    <location>
        <position position="138"/>
    </location>
    <ligand>
        <name>UDP-N-acetyl-alpha-D-glucosamine</name>
        <dbReference type="ChEBI" id="CHEBI:57705"/>
    </ligand>
</feature>
<feature type="binding site" evidence="1">
    <location>
        <position position="153"/>
    </location>
    <ligand>
        <name>UDP-N-acetyl-alpha-D-glucosamine</name>
        <dbReference type="ChEBI" id="CHEBI:57705"/>
    </ligand>
</feature>
<feature type="binding site" evidence="1">
    <location>
        <position position="168"/>
    </location>
    <ligand>
        <name>UDP-N-acetyl-alpha-D-glucosamine</name>
        <dbReference type="ChEBI" id="CHEBI:57705"/>
    </ligand>
</feature>
<feature type="binding site" evidence="1">
    <location>
        <position position="226"/>
    </location>
    <ligand>
        <name>Mg(2+)</name>
        <dbReference type="ChEBI" id="CHEBI:18420"/>
    </ligand>
</feature>
<feature type="binding site" evidence="1">
    <location>
        <position position="226"/>
    </location>
    <ligand>
        <name>UDP-N-acetyl-alpha-D-glucosamine</name>
        <dbReference type="ChEBI" id="CHEBI:57705"/>
    </ligand>
</feature>
<feature type="binding site" evidence="1">
    <location>
        <position position="332"/>
    </location>
    <ligand>
        <name>UDP-N-acetyl-alpha-D-glucosamine</name>
        <dbReference type="ChEBI" id="CHEBI:57705"/>
    </ligand>
</feature>
<feature type="binding site" evidence="1">
    <location>
        <position position="350"/>
    </location>
    <ligand>
        <name>UDP-N-acetyl-alpha-D-glucosamine</name>
        <dbReference type="ChEBI" id="CHEBI:57705"/>
    </ligand>
</feature>
<feature type="binding site" evidence="1">
    <location>
        <position position="365"/>
    </location>
    <ligand>
        <name>UDP-N-acetyl-alpha-D-glucosamine</name>
        <dbReference type="ChEBI" id="CHEBI:57705"/>
    </ligand>
</feature>
<feature type="binding site" evidence="1">
    <location>
        <position position="376"/>
    </location>
    <ligand>
        <name>UDP-N-acetyl-alpha-D-glucosamine</name>
        <dbReference type="ChEBI" id="CHEBI:57705"/>
    </ligand>
</feature>
<feature type="binding site" evidence="1">
    <location>
        <position position="379"/>
    </location>
    <ligand>
        <name>acetyl-CoA</name>
        <dbReference type="ChEBI" id="CHEBI:57288"/>
    </ligand>
</feature>
<feature type="binding site" evidence="1">
    <location>
        <begin position="385"/>
        <end position="386"/>
    </location>
    <ligand>
        <name>acetyl-CoA</name>
        <dbReference type="ChEBI" id="CHEBI:57288"/>
    </ligand>
</feature>
<feature type="binding site" evidence="1">
    <location>
        <position position="404"/>
    </location>
    <ligand>
        <name>acetyl-CoA</name>
        <dbReference type="ChEBI" id="CHEBI:57288"/>
    </ligand>
</feature>
<feature type="binding site" evidence="1">
    <location>
        <position position="422"/>
    </location>
    <ligand>
        <name>acetyl-CoA</name>
        <dbReference type="ChEBI" id="CHEBI:57288"/>
    </ligand>
</feature>
<feature type="binding site" evidence="1">
    <location>
        <position position="439"/>
    </location>
    <ligand>
        <name>acetyl-CoA</name>
        <dbReference type="ChEBI" id="CHEBI:57288"/>
    </ligand>
</feature>
<keyword id="KW-0012">Acyltransferase</keyword>
<keyword id="KW-0133">Cell shape</keyword>
<keyword id="KW-0961">Cell wall biogenesis/degradation</keyword>
<keyword id="KW-0963">Cytoplasm</keyword>
<keyword id="KW-0460">Magnesium</keyword>
<keyword id="KW-0479">Metal-binding</keyword>
<keyword id="KW-0511">Multifunctional enzyme</keyword>
<keyword id="KW-0548">Nucleotidyltransferase</keyword>
<keyword id="KW-0573">Peptidoglycan synthesis</keyword>
<keyword id="KW-1185">Reference proteome</keyword>
<keyword id="KW-0677">Repeat</keyword>
<keyword id="KW-0808">Transferase</keyword>
<sequence>MEQALSIVVLAAGKGTRMRSRYPKLLHPVGGRPMLDHVLRTAFSLEPEAVHVVHGHGAEAVQAAHADWPVRWVVQEPQLGTGHAVEQAIPAIPDDHQVLVLYGDVPLVRPETLQALLAEADGGLGLLSVDFPDPTGYGRVLRDGHGAVTGVVEHKDATAAQRRVTECNTGLLAAPAGRLKAWLQRLDNDNAQAEYYLTDVIAMAVADGVRVAAYPVADPAEVQGVNDRVQLAAAERVWQRRQAEDWMRAGVTILDPDRFDLRGHFAAGEDCRIDVGVVLEGRVELGAGVEIGPHCVLRDVALGDGTRVEAHSVLDGATAGRNCRIGPFARLRPGTDLADGAKVGNFVETKAARIGPGSKVNHLSYMGDAELGRDVNVGAGTITCNYDGHSKHRTEIGDGAFIGSGTQLVAPVRVGRGATIGAGSTVTRDAPDEALTVARSAQRSIHGWRRPGQRPDRGEGSDA</sequence>